<organism>
    <name type="scientific">Arthrobacter sp. (strain FB24)</name>
    <dbReference type="NCBI Taxonomy" id="290399"/>
    <lineage>
        <taxon>Bacteria</taxon>
        <taxon>Bacillati</taxon>
        <taxon>Actinomycetota</taxon>
        <taxon>Actinomycetes</taxon>
        <taxon>Micrococcales</taxon>
        <taxon>Micrococcaceae</taxon>
        <taxon>Arthrobacter</taxon>
    </lineage>
</organism>
<accession>A0JX84</accession>
<dbReference type="EC" id="4.2.3.5" evidence="1"/>
<dbReference type="EMBL" id="CP000454">
    <property type="protein sequence ID" value="ABK03654.1"/>
    <property type="molecule type" value="Genomic_DNA"/>
</dbReference>
<dbReference type="RefSeq" id="WP_011692118.1">
    <property type="nucleotide sequence ID" value="NC_008541.1"/>
</dbReference>
<dbReference type="SMR" id="A0JX84"/>
<dbReference type="STRING" id="290399.Arth_2274"/>
<dbReference type="KEGG" id="art:Arth_2274"/>
<dbReference type="eggNOG" id="COG0082">
    <property type="taxonomic scope" value="Bacteria"/>
</dbReference>
<dbReference type="HOGENOM" id="CLU_034547_2_0_11"/>
<dbReference type="OrthoDB" id="9771806at2"/>
<dbReference type="UniPathway" id="UPA00053">
    <property type="reaction ID" value="UER00090"/>
</dbReference>
<dbReference type="Proteomes" id="UP000000754">
    <property type="component" value="Chromosome"/>
</dbReference>
<dbReference type="GO" id="GO:0005829">
    <property type="term" value="C:cytosol"/>
    <property type="evidence" value="ECO:0007669"/>
    <property type="project" value="TreeGrafter"/>
</dbReference>
<dbReference type="GO" id="GO:0004107">
    <property type="term" value="F:chorismate synthase activity"/>
    <property type="evidence" value="ECO:0007669"/>
    <property type="project" value="UniProtKB-UniRule"/>
</dbReference>
<dbReference type="GO" id="GO:0010181">
    <property type="term" value="F:FMN binding"/>
    <property type="evidence" value="ECO:0007669"/>
    <property type="project" value="TreeGrafter"/>
</dbReference>
<dbReference type="GO" id="GO:0008652">
    <property type="term" value="P:amino acid biosynthetic process"/>
    <property type="evidence" value="ECO:0007669"/>
    <property type="project" value="UniProtKB-KW"/>
</dbReference>
<dbReference type="GO" id="GO:0009073">
    <property type="term" value="P:aromatic amino acid family biosynthetic process"/>
    <property type="evidence" value="ECO:0007669"/>
    <property type="project" value="UniProtKB-KW"/>
</dbReference>
<dbReference type="GO" id="GO:0009423">
    <property type="term" value="P:chorismate biosynthetic process"/>
    <property type="evidence" value="ECO:0007669"/>
    <property type="project" value="UniProtKB-UniRule"/>
</dbReference>
<dbReference type="CDD" id="cd07304">
    <property type="entry name" value="Chorismate_synthase"/>
    <property type="match status" value="1"/>
</dbReference>
<dbReference type="FunFam" id="3.60.150.10:FF:000002">
    <property type="entry name" value="Chorismate synthase"/>
    <property type="match status" value="1"/>
</dbReference>
<dbReference type="Gene3D" id="3.60.150.10">
    <property type="entry name" value="Chorismate synthase AroC"/>
    <property type="match status" value="1"/>
</dbReference>
<dbReference type="HAMAP" id="MF_00300">
    <property type="entry name" value="Chorismate_synth"/>
    <property type="match status" value="1"/>
</dbReference>
<dbReference type="InterPro" id="IPR000453">
    <property type="entry name" value="Chorismate_synth"/>
</dbReference>
<dbReference type="InterPro" id="IPR035904">
    <property type="entry name" value="Chorismate_synth_AroC_sf"/>
</dbReference>
<dbReference type="InterPro" id="IPR020541">
    <property type="entry name" value="Chorismate_synthase_CS"/>
</dbReference>
<dbReference type="NCBIfam" id="TIGR00033">
    <property type="entry name" value="aroC"/>
    <property type="match status" value="1"/>
</dbReference>
<dbReference type="NCBIfam" id="NF003793">
    <property type="entry name" value="PRK05382.1"/>
    <property type="match status" value="1"/>
</dbReference>
<dbReference type="PANTHER" id="PTHR21085">
    <property type="entry name" value="CHORISMATE SYNTHASE"/>
    <property type="match status" value="1"/>
</dbReference>
<dbReference type="PANTHER" id="PTHR21085:SF0">
    <property type="entry name" value="CHORISMATE SYNTHASE"/>
    <property type="match status" value="1"/>
</dbReference>
<dbReference type="Pfam" id="PF01264">
    <property type="entry name" value="Chorismate_synt"/>
    <property type="match status" value="1"/>
</dbReference>
<dbReference type="PIRSF" id="PIRSF001456">
    <property type="entry name" value="Chorismate_synth"/>
    <property type="match status" value="1"/>
</dbReference>
<dbReference type="SUPFAM" id="SSF103263">
    <property type="entry name" value="Chorismate synthase, AroC"/>
    <property type="match status" value="1"/>
</dbReference>
<dbReference type="PROSITE" id="PS00787">
    <property type="entry name" value="CHORISMATE_SYNTHASE_1"/>
    <property type="match status" value="1"/>
</dbReference>
<dbReference type="PROSITE" id="PS00788">
    <property type="entry name" value="CHORISMATE_SYNTHASE_2"/>
    <property type="match status" value="1"/>
</dbReference>
<dbReference type="PROSITE" id="PS00789">
    <property type="entry name" value="CHORISMATE_SYNTHASE_3"/>
    <property type="match status" value="1"/>
</dbReference>
<name>AROC_ARTS2</name>
<feature type="chain" id="PRO_0000322387" description="Chorismate synthase">
    <location>
        <begin position="1"/>
        <end position="399"/>
    </location>
</feature>
<feature type="binding site" evidence="1">
    <location>
        <position position="40"/>
    </location>
    <ligand>
        <name>NADP(+)</name>
        <dbReference type="ChEBI" id="CHEBI:58349"/>
    </ligand>
</feature>
<feature type="binding site" evidence="1">
    <location>
        <position position="46"/>
    </location>
    <ligand>
        <name>NADP(+)</name>
        <dbReference type="ChEBI" id="CHEBI:58349"/>
    </ligand>
</feature>
<feature type="binding site" evidence="1">
    <location>
        <begin position="135"/>
        <end position="137"/>
    </location>
    <ligand>
        <name>FMN</name>
        <dbReference type="ChEBI" id="CHEBI:58210"/>
    </ligand>
</feature>
<feature type="binding site" evidence="1">
    <location>
        <begin position="256"/>
        <end position="257"/>
    </location>
    <ligand>
        <name>FMN</name>
        <dbReference type="ChEBI" id="CHEBI:58210"/>
    </ligand>
</feature>
<feature type="binding site" evidence="1">
    <location>
        <position position="301"/>
    </location>
    <ligand>
        <name>FMN</name>
        <dbReference type="ChEBI" id="CHEBI:58210"/>
    </ligand>
</feature>
<feature type="binding site" evidence="1">
    <location>
        <begin position="316"/>
        <end position="320"/>
    </location>
    <ligand>
        <name>FMN</name>
        <dbReference type="ChEBI" id="CHEBI:58210"/>
    </ligand>
</feature>
<feature type="binding site" evidence="1">
    <location>
        <position position="342"/>
    </location>
    <ligand>
        <name>FMN</name>
        <dbReference type="ChEBI" id="CHEBI:58210"/>
    </ligand>
</feature>
<sequence length="399" mass="41895">MLRWLTAGESHGPALVGIIEGVPAGVELTSSQIADALARRRLGYGRGARMKFEQDVVTVLGGVRHGITQGGPVAIQVGNTEWPKWEQIMAADPVAPEILADQARNAPLTRPRPGHADFTGMQKYGFDEARPVLERASARETATRVALGTVASQFLKQLGIELVSHTVSIASVSVPEGRPLPVPANVIALDADPLRCFDRETSDAMVAEVDAAHKEGETLGGVVEVLAYGLPPGLGSYVHWDRRLDSRLAAALMGIQAIKGVEVGDGFLTASRRGSAAHDEIVKDSDGRIIRTSNRAGGIEGGMSIGDVLRVRAAMKPIATVPRALKTIDVSTGEAAKAHHQRSDVCAVPAAGVVAEAMVALVLAEAVAEKFGGDSVAETARNIKGYLDNIPASLDSIGQ</sequence>
<gene>
    <name evidence="1" type="primary">aroC</name>
    <name type="ordered locus">Arth_2274</name>
</gene>
<reference key="1">
    <citation type="journal article" date="2013" name="Stand. Genomic Sci.">
        <title>Complete genome sequence of Arthrobacter sp. strain FB24.</title>
        <authorList>
            <person name="Nakatsu C.H."/>
            <person name="Barabote R."/>
            <person name="Thompson S."/>
            <person name="Bruce D."/>
            <person name="Detter C."/>
            <person name="Brettin T."/>
            <person name="Han C."/>
            <person name="Beasley F."/>
            <person name="Chen W."/>
            <person name="Konopka A."/>
            <person name="Xie G."/>
        </authorList>
    </citation>
    <scope>NUCLEOTIDE SEQUENCE [LARGE SCALE GENOMIC DNA]</scope>
    <source>
        <strain>FB24</strain>
    </source>
</reference>
<proteinExistence type="inferred from homology"/>
<evidence type="ECO:0000255" key="1">
    <source>
        <dbReference type="HAMAP-Rule" id="MF_00300"/>
    </source>
</evidence>
<keyword id="KW-0028">Amino-acid biosynthesis</keyword>
<keyword id="KW-0057">Aromatic amino acid biosynthesis</keyword>
<keyword id="KW-0274">FAD</keyword>
<keyword id="KW-0285">Flavoprotein</keyword>
<keyword id="KW-0288">FMN</keyword>
<keyword id="KW-0456">Lyase</keyword>
<keyword id="KW-0521">NADP</keyword>
<keyword id="KW-1185">Reference proteome</keyword>
<comment type="function">
    <text evidence="1">Catalyzes the anti-1,4-elimination of the C-3 phosphate and the C-6 proR hydrogen from 5-enolpyruvylshikimate-3-phosphate (EPSP) to yield chorismate, which is the branch point compound that serves as the starting substrate for the three terminal pathways of aromatic amino acid biosynthesis. This reaction introduces a second double bond into the aromatic ring system.</text>
</comment>
<comment type="catalytic activity">
    <reaction evidence="1">
        <text>5-O-(1-carboxyvinyl)-3-phosphoshikimate = chorismate + phosphate</text>
        <dbReference type="Rhea" id="RHEA:21020"/>
        <dbReference type="ChEBI" id="CHEBI:29748"/>
        <dbReference type="ChEBI" id="CHEBI:43474"/>
        <dbReference type="ChEBI" id="CHEBI:57701"/>
        <dbReference type="EC" id="4.2.3.5"/>
    </reaction>
</comment>
<comment type="cofactor">
    <cofactor evidence="1">
        <name>FMNH2</name>
        <dbReference type="ChEBI" id="CHEBI:57618"/>
    </cofactor>
    <text evidence="1">Reduced FMN (FMNH(2)).</text>
</comment>
<comment type="pathway">
    <text evidence="1">Metabolic intermediate biosynthesis; chorismate biosynthesis; chorismate from D-erythrose 4-phosphate and phosphoenolpyruvate: step 7/7.</text>
</comment>
<comment type="subunit">
    <text evidence="1">Homotetramer.</text>
</comment>
<comment type="similarity">
    <text evidence="1">Belongs to the chorismate synthase family.</text>
</comment>
<protein>
    <recommendedName>
        <fullName evidence="1">Chorismate synthase</fullName>
        <shortName evidence="1">CS</shortName>
        <ecNumber evidence="1">4.2.3.5</ecNumber>
    </recommendedName>
    <alternativeName>
        <fullName evidence="1">5-enolpyruvylshikimate-3-phosphate phospholyase</fullName>
    </alternativeName>
</protein>